<feature type="chain" id="PRO_0000391053" description="UPF0761 membrane protein Rru_A2625">
    <location>
        <begin position="1"/>
        <end position="440"/>
    </location>
</feature>
<feature type="transmembrane region" description="Helical" evidence="1">
    <location>
        <begin position="29"/>
        <end position="49"/>
    </location>
</feature>
<feature type="transmembrane region" description="Helical" evidence="1">
    <location>
        <begin position="61"/>
        <end position="81"/>
    </location>
</feature>
<feature type="transmembrane region" description="Helical" evidence="1">
    <location>
        <begin position="117"/>
        <end position="137"/>
    </location>
</feature>
<feature type="transmembrane region" description="Helical" evidence="1">
    <location>
        <begin position="157"/>
        <end position="177"/>
    </location>
</feature>
<feature type="transmembrane region" description="Helical" evidence="1">
    <location>
        <begin position="201"/>
        <end position="221"/>
    </location>
</feature>
<feature type="transmembrane region" description="Helical" evidence="1">
    <location>
        <begin position="224"/>
        <end position="244"/>
    </location>
</feature>
<feature type="transmembrane region" description="Helical" evidence="1">
    <location>
        <begin position="264"/>
        <end position="284"/>
    </location>
</feature>
<evidence type="ECO:0000255" key="1">
    <source>
        <dbReference type="HAMAP-Rule" id="MF_00672"/>
    </source>
</evidence>
<proteinExistence type="inferred from homology"/>
<organism>
    <name type="scientific">Rhodospirillum rubrum (strain ATCC 11170 / ATH 1.1.1 / DSM 467 / LMG 4362 / NCIMB 8255 / S1)</name>
    <dbReference type="NCBI Taxonomy" id="269796"/>
    <lineage>
        <taxon>Bacteria</taxon>
        <taxon>Pseudomonadati</taxon>
        <taxon>Pseudomonadota</taxon>
        <taxon>Alphaproteobacteria</taxon>
        <taxon>Rhodospirillales</taxon>
        <taxon>Rhodospirillaceae</taxon>
        <taxon>Rhodospirillum</taxon>
    </lineage>
</organism>
<accession>Q2RR23</accession>
<reference key="1">
    <citation type="journal article" date="2011" name="Stand. Genomic Sci.">
        <title>Complete genome sequence of Rhodospirillum rubrum type strain (S1).</title>
        <authorList>
            <person name="Munk A.C."/>
            <person name="Copeland A."/>
            <person name="Lucas S."/>
            <person name="Lapidus A."/>
            <person name="Del Rio T.G."/>
            <person name="Barry K."/>
            <person name="Detter J.C."/>
            <person name="Hammon N."/>
            <person name="Israni S."/>
            <person name="Pitluck S."/>
            <person name="Brettin T."/>
            <person name="Bruce D."/>
            <person name="Han C."/>
            <person name="Tapia R."/>
            <person name="Gilna P."/>
            <person name="Schmutz J."/>
            <person name="Larimer F."/>
            <person name="Land M."/>
            <person name="Kyrpides N.C."/>
            <person name="Mavromatis K."/>
            <person name="Richardson P."/>
            <person name="Rohde M."/>
            <person name="Goeker M."/>
            <person name="Klenk H.P."/>
            <person name="Zhang Y."/>
            <person name="Roberts G.P."/>
            <person name="Reslewic S."/>
            <person name="Schwartz D.C."/>
        </authorList>
    </citation>
    <scope>NUCLEOTIDE SEQUENCE [LARGE SCALE GENOMIC DNA]</scope>
    <source>
        <strain>ATCC 11170 / ATH 1.1.1 / DSM 467 / LMG 4362 / NCIMB 8255 / S1</strain>
    </source>
</reference>
<comment type="subcellular location">
    <subcellularLocation>
        <location evidence="1">Cell inner membrane</location>
        <topology evidence="1">Multi-pass membrane protein</topology>
    </subcellularLocation>
</comment>
<comment type="similarity">
    <text evidence="1">Belongs to the UPF0761 family.</text>
</comment>
<gene>
    <name type="ordered locus">Rru_A2625</name>
</gene>
<name>Y2625_RHORT</name>
<dbReference type="EMBL" id="CP000230">
    <property type="protein sequence ID" value="ABC23422.1"/>
    <property type="molecule type" value="Genomic_DNA"/>
</dbReference>
<dbReference type="RefSeq" id="WP_011390375.1">
    <property type="nucleotide sequence ID" value="NC_007643.1"/>
</dbReference>
<dbReference type="RefSeq" id="YP_427709.1">
    <property type="nucleotide sequence ID" value="NC_007643.1"/>
</dbReference>
<dbReference type="SMR" id="Q2RR23"/>
<dbReference type="STRING" id="269796.Rru_A2625"/>
<dbReference type="EnsemblBacteria" id="ABC23422">
    <property type="protein sequence ID" value="ABC23422"/>
    <property type="gene ID" value="Rru_A2625"/>
</dbReference>
<dbReference type="KEGG" id="rru:Rru_A2625"/>
<dbReference type="PATRIC" id="fig|269796.9.peg.2735"/>
<dbReference type="eggNOG" id="COG1295">
    <property type="taxonomic scope" value="Bacteria"/>
</dbReference>
<dbReference type="HOGENOM" id="CLU_032288_1_0_5"/>
<dbReference type="PhylomeDB" id="Q2RR23"/>
<dbReference type="Proteomes" id="UP000001929">
    <property type="component" value="Chromosome"/>
</dbReference>
<dbReference type="GO" id="GO:0005886">
    <property type="term" value="C:plasma membrane"/>
    <property type="evidence" value="ECO:0007669"/>
    <property type="project" value="UniProtKB-SubCell"/>
</dbReference>
<dbReference type="Gene3D" id="1.10.10.10">
    <property type="entry name" value="Winged helix-like DNA-binding domain superfamily/Winged helix DNA-binding domain"/>
    <property type="match status" value="1"/>
</dbReference>
<dbReference type="HAMAP" id="MF_00672">
    <property type="entry name" value="UPF0761"/>
    <property type="match status" value="1"/>
</dbReference>
<dbReference type="InterPro" id="IPR023679">
    <property type="entry name" value="UPF0761_bac"/>
</dbReference>
<dbReference type="InterPro" id="IPR017039">
    <property type="entry name" value="Virul_fac_BrkB"/>
</dbReference>
<dbReference type="InterPro" id="IPR036388">
    <property type="entry name" value="WH-like_DNA-bd_sf"/>
</dbReference>
<dbReference type="NCBIfam" id="TIGR00765">
    <property type="entry name" value="yihY_not_rbn"/>
    <property type="match status" value="1"/>
</dbReference>
<dbReference type="PANTHER" id="PTHR30213">
    <property type="entry name" value="INNER MEMBRANE PROTEIN YHJD"/>
    <property type="match status" value="1"/>
</dbReference>
<dbReference type="PANTHER" id="PTHR30213:SF0">
    <property type="entry name" value="UPF0761 MEMBRANE PROTEIN YIHY"/>
    <property type="match status" value="1"/>
</dbReference>
<dbReference type="Pfam" id="PF03631">
    <property type="entry name" value="Virul_fac_BrkB"/>
    <property type="match status" value="1"/>
</dbReference>
<protein>
    <recommendedName>
        <fullName evidence="1">UPF0761 membrane protein Rru_A2625</fullName>
    </recommendedName>
</protein>
<keyword id="KW-0997">Cell inner membrane</keyword>
<keyword id="KW-1003">Cell membrane</keyword>
<keyword id="KW-0472">Membrane</keyword>
<keyword id="KW-1185">Reference proteome</keyword>
<keyword id="KW-0812">Transmembrane</keyword>
<keyword id="KW-1133">Transmembrane helix</keyword>
<sequence>MVDDENRRRGLLGRRSHARSWLPVKPRRILATAGSFTILVLRALITHDIPRLAASLAYTSLLALVPLIAIALAILAAFPGFGDERERMVAWIIETFVPYRRTEILDQVEHFVGAAAGLTALGVAGLTLTAIILLLTIESSLNAIFRVEKSRHPLARLLVYWSVLTGGPLLMGLSFSLSSYLVAIRHLVGTDVMSPFDALTPTLGPPLLSLTAMTLLYMLVPNRPVPLFHALAGALVATLASALLRSAFLMVITRGLSYETLYGALAALPAFLVWMYLSWAVVLMGAVTAAEIPNWKMARRLTRAGQDERAARLRIAVEIMVAAARAYGEGQGDGASRRALSALTATPDRRQAGVLRDLDKAGLLIRDEDGAVLPGRDPRRITLAEILHALTLAPPTGTVGGPGWPDLLRHALETAGGDYDRALGLSLDALVQAEPLGARI</sequence>